<protein>
    <recommendedName>
        <fullName evidence="1">ATP synthase subunit b</fullName>
    </recommendedName>
    <alternativeName>
        <fullName evidence="1">ATP synthase F(0) sector subunit b</fullName>
    </alternativeName>
    <alternativeName>
        <fullName evidence="1">ATPase subunit I</fullName>
    </alternativeName>
    <alternativeName>
        <fullName evidence="1">F-type ATPase subunit b</fullName>
        <shortName evidence="1">F-ATPase subunit b</shortName>
    </alternativeName>
</protein>
<comment type="function">
    <text evidence="1">F(1)F(0) ATP synthase produces ATP from ADP in the presence of a proton or sodium gradient. F-type ATPases consist of two structural domains, F(1) containing the extramembraneous catalytic core and F(0) containing the membrane proton channel, linked together by a central stalk and a peripheral stalk. During catalysis, ATP synthesis in the catalytic domain of F(1) is coupled via a rotary mechanism of the central stalk subunits to proton translocation.</text>
</comment>
<comment type="function">
    <text evidence="1">Component of the F(0) channel, it forms part of the peripheral stalk, linking F(1) to F(0).</text>
</comment>
<comment type="subunit">
    <text evidence="1 2 3">F-type ATPases have 2 components, F(1) - the catalytic core - and F(0) - the membrane proton channel. F(1) has five subunits: alpha(3), beta(3), gamma(1), delta(1), epsilon(1). F(0) has three main subunits: a(1), b(2) and c(10-14). The alpha and beta chains form an alternating ring which encloses part of the gamma chain. F(1) is attached to F(0) by a central stalk formed by the gamma and epsilon chains, while a peripheral stalk is formed by the delta and b chains (Probable). The F(1)F(0) complex interacts with SpoIIIJ and YqjG; YqgA is found in the same complex.</text>
</comment>
<comment type="subcellular location">
    <subcellularLocation>
        <location evidence="1">Cell membrane</location>
        <topology evidence="1">Single-pass membrane protein</topology>
    </subcellularLocation>
</comment>
<comment type="similarity">
    <text evidence="1">Belongs to the ATPase B chain family.</text>
</comment>
<accession>P37814</accession>
<dbReference type="EMBL" id="Z28592">
    <property type="protein sequence ID" value="CAA82256.1"/>
    <property type="molecule type" value="Genomic_DNA"/>
</dbReference>
<dbReference type="EMBL" id="AL009126">
    <property type="protein sequence ID" value="CAB15702.1"/>
    <property type="molecule type" value="Genomic_DNA"/>
</dbReference>
<dbReference type="PIR" id="I40364">
    <property type="entry name" value="I40364"/>
</dbReference>
<dbReference type="RefSeq" id="NP_391566.1">
    <property type="nucleotide sequence ID" value="NC_000964.3"/>
</dbReference>
<dbReference type="RefSeq" id="WP_003244051.1">
    <property type="nucleotide sequence ID" value="NZ_OZ025638.1"/>
</dbReference>
<dbReference type="SMR" id="P37814"/>
<dbReference type="FunCoup" id="P37814">
    <property type="interactions" value="115"/>
</dbReference>
<dbReference type="IntAct" id="P37814">
    <property type="interactions" value="2"/>
</dbReference>
<dbReference type="STRING" id="224308.BSU36850"/>
<dbReference type="jPOST" id="P37814"/>
<dbReference type="PaxDb" id="224308-BSU36850"/>
<dbReference type="EnsemblBacteria" id="CAB15702">
    <property type="protein sequence ID" value="CAB15702"/>
    <property type="gene ID" value="BSU_36850"/>
</dbReference>
<dbReference type="GeneID" id="86871696"/>
<dbReference type="GeneID" id="936998"/>
<dbReference type="KEGG" id="bsu:BSU36850"/>
<dbReference type="PATRIC" id="fig|224308.179.peg.3991"/>
<dbReference type="eggNOG" id="COG0711">
    <property type="taxonomic scope" value="Bacteria"/>
</dbReference>
<dbReference type="InParanoid" id="P37814"/>
<dbReference type="OrthoDB" id="282095at2"/>
<dbReference type="PhylomeDB" id="P37814"/>
<dbReference type="BioCyc" id="BSUB:BSU36850-MONOMER"/>
<dbReference type="Proteomes" id="UP000001570">
    <property type="component" value="Chromosome"/>
</dbReference>
<dbReference type="GO" id="GO:0005886">
    <property type="term" value="C:plasma membrane"/>
    <property type="evidence" value="ECO:0007669"/>
    <property type="project" value="UniProtKB-SubCell"/>
</dbReference>
<dbReference type="GO" id="GO:0045259">
    <property type="term" value="C:proton-transporting ATP synthase complex"/>
    <property type="evidence" value="ECO:0007669"/>
    <property type="project" value="UniProtKB-KW"/>
</dbReference>
<dbReference type="GO" id="GO:0046933">
    <property type="term" value="F:proton-transporting ATP synthase activity, rotational mechanism"/>
    <property type="evidence" value="ECO:0007669"/>
    <property type="project" value="UniProtKB-UniRule"/>
</dbReference>
<dbReference type="CDD" id="cd06503">
    <property type="entry name" value="ATP-synt_Fo_b"/>
    <property type="match status" value="1"/>
</dbReference>
<dbReference type="Gene3D" id="1.20.5.620">
    <property type="entry name" value="F1F0 ATP synthase subunit B, membrane domain"/>
    <property type="match status" value="1"/>
</dbReference>
<dbReference type="HAMAP" id="MF_01398">
    <property type="entry name" value="ATP_synth_b_bprime"/>
    <property type="match status" value="1"/>
</dbReference>
<dbReference type="InterPro" id="IPR028987">
    <property type="entry name" value="ATP_synth_B-like_membr_sf"/>
</dbReference>
<dbReference type="InterPro" id="IPR002146">
    <property type="entry name" value="ATP_synth_b/b'su_bac/chlpt"/>
</dbReference>
<dbReference type="InterPro" id="IPR005864">
    <property type="entry name" value="ATP_synth_F0_bsu_bac"/>
</dbReference>
<dbReference type="InterPro" id="IPR050059">
    <property type="entry name" value="ATP_synthase_B_chain"/>
</dbReference>
<dbReference type="NCBIfam" id="TIGR01144">
    <property type="entry name" value="ATP_synt_b"/>
    <property type="match status" value="1"/>
</dbReference>
<dbReference type="PANTHER" id="PTHR33445:SF1">
    <property type="entry name" value="ATP SYNTHASE SUBUNIT B"/>
    <property type="match status" value="1"/>
</dbReference>
<dbReference type="PANTHER" id="PTHR33445">
    <property type="entry name" value="ATP SYNTHASE SUBUNIT B', CHLOROPLASTIC"/>
    <property type="match status" value="1"/>
</dbReference>
<dbReference type="Pfam" id="PF00430">
    <property type="entry name" value="ATP-synt_B"/>
    <property type="match status" value="1"/>
</dbReference>
<dbReference type="SUPFAM" id="SSF81573">
    <property type="entry name" value="F1F0 ATP synthase subunit B, membrane domain"/>
    <property type="match status" value="1"/>
</dbReference>
<sequence length="170" mass="19208">MSQLPLELGLSFNGGDILFQLLAMLILLALLKKYALGPLLNIMKQREDHIAGEITSAEEKNKEAQQLIEEQRVLLKEARQESQTLIENAKKLGEKQKEEIIQAARAESERLKEAARTEIVKEKEQAVSALREQVASLSVMIASKVIEKELDEQAQEKLIQDYLKEVGESR</sequence>
<gene>
    <name evidence="1" type="primary">atpF</name>
    <name type="ordered locus">BSU36850</name>
</gene>
<evidence type="ECO:0000255" key="1">
    <source>
        <dbReference type="HAMAP-Rule" id="MF_01398"/>
    </source>
</evidence>
<evidence type="ECO:0000269" key="2">
    <source>
    </source>
</evidence>
<evidence type="ECO:0000305" key="3"/>
<keyword id="KW-0066">ATP synthesis</keyword>
<keyword id="KW-1003">Cell membrane</keyword>
<keyword id="KW-0138">CF(0)</keyword>
<keyword id="KW-0375">Hydrogen ion transport</keyword>
<keyword id="KW-0406">Ion transport</keyword>
<keyword id="KW-0472">Membrane</keyword>
<keyword id="KW-1185">Reference proteome</keyword>
<keyword id="KW-0812">Transmembrane</keyword>
<keyword id="KW-1133">Transmembrane helix</keyword>
<keyword id="KW-0813">Transport</keyword>
<proteinExistence type="evidence at protein level"/>
<reference key="1">
    <citation type="journal article" date="1994" name="J. Bacteriol.">
        <title>Bacillus subtilis F0F1 ATPase: DNA sequence of the atp operon and characterization of atp mutants.</title>
        <authorList>
            <person name="Santana M."/>
            <person name="Ionescu M.S."/>
            <person name="Vertes A."/>
            <person name="Longin R."/>
            <person name="Kunst F."/>
            <person name="Danchin A."/>
            <person name="Glaser P."/>
        </authorList>
    </citation>
    <scope>NUCLEOTIDE SEQUENCE [GENOMIC DNA]</scope>
    <source>
        <strain>168</strain>
    </source>
</reference>
<reference key="2">
    <citation type="journal article" date="1997" name="Nature">
        <title>The complete genome sequence of the Gram-positive bacterium Bacillus subtilis.</title>
        <authorList>
            <person name="Kunst F."/>
            <person name="Ogasawara N."/>
            <person name="Moszer I."/>
            <person name="Albertini A.M."/>
            <person name="Alloni G."/>
            <person name="Azevedo V."/>
            <person name="Bertero M.G."/>
            <person name="Bessieres P."/>
            <person name="Bolotin A."/>
            <person name="Borchert S."/>
            <person name="Borriss R."/>
            <person name="Boursier L."/>
            <person name="Brans A."/>
            <person name="Braun M."/>
            <person name="Brignell S.C."/>
            <person name="Bron S."/>
            <person name="Brouillet S."/>
            <person name="Bruschi C.V."/>
            <person name="Caldwell B."/>
            <person name="Capuano V."/>
            <person name="Carter N.M."/>
            <person name="Choi S.-K."/>
            <person name="Codani J.-J."/>
            <person name="Connerton I.F."/>
            <person name="Cummings N.J."/>
            <person name="Daniel R.A."/>
            <person name="Denizot F."/>
            <person name="Devine K.M."/>
            <person name="Duesterhoeft A."/>
            <person name="Ehrlich S.D."/>
            <person name="Emmerson P.T."/>
            <person name="Entian K.-D."/>
            <person name="Errington J."/>
            <person name="Fabret C."/>
            <person name="Ferrari E."/>
            <person name="Foulger D."/>
            <person name="Fritz C."/>
            <person name="Fujita M."/>
            <person name="Fujita Y."/>
            <person name="Fuma S."/>
            <person name="Galizzi A."/>
            <person name="Galleron N."/>
            <person name="Ghim S.-Y."/>
            <person name="Glaser P."/>
            <person name="Goffeau A."/>
            <person name="Golightly E.J."/>
            <person name="Grandi G."/>
            <person name="Guiseppi G."/>
            <person name="Guy B.J."/>
            <person name="Haga K."/>
            <person name="Haiech J."/>
            <person name="Harwood C.R."/>
            <person name="Henaut A."/>
            <person name="Hilbert H."/>
            <person name="Holsappel S."/>
            <person name="Hosono S."/>
            <person name="Hullo M.-F."/>
            <person name="Itaya M."/>
            <person name="Jones L.-M."/>
            <person name="Joris B."/>
            <person name="Karamata D."/>
            <person name="Kasahara Y."/>
            <person name="Klaerr-Blanchard M."/>
            <person name="Klein C."/>
            <person name="Kobayashi Y."/>
            <person name="Koetter P."/>
            <person name="Koningstein G."/>
            <person name="Krogh S."/>
            <person name="Kumano M."/>
            <person name="Kurita K."/>
            <person name="Lapidus A."/>
            <person name="Lardinois S."/>
            <person name="Lauber J."/>
            <person name="Lazarevic V."/>
            <person name="Lee S.-M."/>
            <person name="Levine A."/>
            <person name="Liu H."/>
            <person name="Masuda S."/>
            <person name="Mauel C."/>
            <person name="Medigue C."/>
            <person name="Medina N."/>
            <person name="Mellado R.P."/>
            <person name="Mizuno M."/>
            <person name="Moestl D."/>
            <person name="Nakai S."/>
            <person name="Noback M."/>
            <person name="Noone D."/>
            <person name="O'Reilly M."/>
            <person name="Ogawa K."/>
            <person name="Ogiwara A."/>
            <person name="Oudega B."/>
            <person name="Park S.-H."/>
            <person name="Parro V."/>
            <person name="Pohl T.M."/>
            <person name="Portetelle D."/>
            <person name="Porwollik S."/>
            <person name="Prescott A.M."/>
            <person name="Presecan E."/>
            <person name="Pujic P."/>
            <person name="Purnelle B."/>
            <person name="Rapoport G."/>
            <person name="Rey M."/>
            <person name="Reynolds S."/>
            <person name="Rieger M."/>
            <person name="Rivolta C."/>
            <person name="Rocha E."/>
            <person name="Roche B."/>
            <person name="Rose M."/>
            <person name="Sadaie Y."/>
            <person name="Sato T."/>
            <person name="Scanlan E."/>
            <person name="Schleich S."/>
            <person name="Schroeter R."/>
            <person name="Scoffone F."/>
            <person name="Sekiguchi J."/>
            <person name="Sekowska A."/>
            <person name="Seror S.J."/>
            <person name="Serror P."/>
            <person name="Shin B.-S."/>
            <person name="Soldo B."/>
            <person name="Sorokin A."/>
            <person name="Tacconi E."/>
            <person name="Takagi T."/>
            <person name="Takahashi H."/>
            <person name="Takemaru K."/>
            <person name="Takeuchi M."/>
            <person name="Tamakoshi A."/>
            <person name="Tanaka T."/>
            <person name="Terpstra P."/>
            <person name="Tognoni A."/>
            <person name="Tosato V."/>
            <person name="Uchiyama S."/>
            <person name="Vandenbol M."/>
            <person name="Vannier F."/>
            <person name="Vassarotti A."/>
            <person name="Viari A."/>
            <person name="Wambutt R."/>
            <person name="Wedler E."/>
            <person name="Wedler H."/>
            <person name="Weitzenegger T."/>
            <person name="Winters P."/>
            <person name="Wipat A."/>
            <person name="Yamamoto H."/>
            <person name="Yamane K."/>
            <person name="Yasumoto K."/>
            <person name="Yata K."/>
            <person name="Yoshida K."/>
            <person name="Yoshikawa H.-F."/>
            <person name="Zumstein E."/>
            <person name="Yoshikawa H."/>
            <person name="Danchin A."/>
        </authorList>
    </citation>
    <scope>NUCLEOTIDE SEQUENCE [LARGE SCALE GENOMIC DNA]</scope>
    <source>
        <strain>168</strain>
    </source>
</reference>
<reference key="3">
    <citation type="journal article" date="2009" name="J. Bacteriol.">
        <title>Bacillus subtilis SpoIIIJ and YqjG function in membrane protein biogenesis.</title>
        <authorList>
            <person name="Saller M.J."/>
            <person name="Fusetti F."/>
            <person name="Driessen A.J."/>
        </authorList>
    </citation>
    <scope>IDENTIFICATION BY MASS SPECTROMETRY</scope>
    <scope>INTERACTION WITH SPOIIIJ AND YQJG</scope>
    <source>
        <strain>168</strain>
    </source>
</reference>
<organism>
    <name type="scientific">Bacillus subtilis (strain 168)</name>
    <dbReference type="NCBI Taxonomy" id="224308"/>
    <lineage>
        <taxon>Bacteria</taxon>
        <taxon>Bacillati</taxon>
        <taxon>Bacillota</taxon>
        <taxon>Bacilli</taxon>
        <taxon>Bacillales</taxon>
        <taxon>Bacillaceae</taxon>
        <taxon>Bacillus</taxon>
    </lineage>
</organism>
<name>ATPF_BACSU</name>
<feature type="chain" id="PRO_0000082366" description="ATP synthase subunit b">
    <location>
        <begin position="1"/>
        <end position="170"/>
    </location>
</feature>
<feature type="transmembrane region" description="Helical" evidence="1">
    <location>
        <begin position="15"/>
        <end position="37"/>
    </location>
</feature>